<dbReference type="EMBL" id="Z97336">
    <property type="status" value="NOT_ANNOTATED_CDS"/>
    <property type="molecule type" value="Genomic_DNA"/>
</dbReference>
<dbReference type="EMBL" id="AL161539">
    <property type="status" value="NOT_ANNOTATED_CDS"/>
    <property type="molecule type" value="Genomic_DNA"/>
</dbReference>
<dbReference type="EMBL" id="CP002687">
    <property type="protein sequence ID" value="AEE83476.1"/>
    <property type="molecule type" value="Genomic_DNA"/>
</dbReference>
<dbReference type="EMBL" id="CP002687">
    <property type="protein sequence ID" value="ANM66716.1"/>
    <property type="molecule type" value="Genomic_DNA"/>
</dbReference>
<dbReference type="EMBL" id="AY133695">
    <property type="protein sequence ID" value="AAM91629.1"/>
    <property type="molecule type" value="mRNA"/>
</dbReference>
<dbReference type="RefSeq" id="NP_001319940.1">
    <molecule id="Q8L7H8-1"/>
    <property type="nucleotide sequence ID" value="NM_001340956.1"/>
</dbReference>
<dbReference type="RefSeq" id="NP_567439.1">
    <molecule id="Q8L7H8-1"/>
    <property type="nucleotide sequence ID" value="NM_117552.4"/>
</dbReference>
<dbReference type="SMR" id="Q8L7H8"/>
<dbReference type="FunCoup" id="Q8L7H8">
    <property type="interactions" value="1524"/>
</dbReference>
<dbReference type="STRING" id="3702.Q8L7H8"/>
<dbReference type="TCDB" id="2.A.105.1.4">
    <property type="family name" value="the mitochondrial pyruvate carrier (mpc) family"/>
</dbReference>
<dbReference type="PaxDb" id="3702-AT4G14695.1"/>
<dbReference type="DNASU" id="827120"/>
<dbReference type="EnsemblPlants" id="AT4G14695.1">
    <molecule id="Q8L7H8-1"/>
    <property type="protein sequence ID" value="AT4G14695.1"/>
    <property type="gene ID" value="AT4G14695"/>
</dbReference>
<dbReference type="EnsemblPlants" id="AT4G14695.3">
    <molecule id="Q8L7H8-1"/>
    <property type="protein sequence ID" value="AT4G14695.3"/>
    <property type="gene ID" value="AT4G14695"/>
</dbReference>
<dbReference type="GeneID" id="827120"/>
<dbReference type="Gramene" id="AT4G14695.1">
    <molecule id="Q8L7H8-1"/>
    <property type="protein sequence ID" value="AT4G14695.1"/>
    <property type="gene ID" value="AT4G14695"/>
</dbReference>
<dbReference type="Gramene" id="AT4G14695.3">
    <molecule id="Q8L7H8-1"/>
    <property type="protein sequence ID" value="AT4G14695.3"/>
    <property type="gene ID" value="AT4G14695"/>
</dbReference>
<dbReference type="KEGG" id="ath:AT4G14695"/>
<dbReference type="Araport" id="AT4G14695"/>
<dbReference type="TAIR" id="AT4G14695">
    <property type="gene designation" value="MPC2"/>
</dbReference>
<dbReference type="eggNOG" id="KOG1589">
    <property type="taxonomic scope" value="Eukaryota"/>
</dbReference>
<dbReference type="HOGENOM" id="CLU_099502_1_2_1"/>
<dbReference type="InParanoid" id="Q8L7H8"/>
<dbReference type="OMA" id="WIISIAY"/>
<dbReference type="OrthoDB" id="869189at2759"/>
<dbReference type="PhylomeDB" id="Q8L7H8"/>
<dbReference type="PRO" id="PR:Q8L7H8"/>
<dbReference type="Proteomes" id="UP000006548">
    <property type="component" value="Chromosome 4"/>
</dbReference>
<dbReference type="ExpressionAtlas" id="Q8L7H8">
    <property type="expression patterns" value="baseline and differential"/>
</dbReference>
<dbReference type="GO" id="GO:0005743">
    <property type="term" value="C:mitochondrial inner membrane"/>
    <property type="evidence" value="ECO:0007669"/>
    <property type="project" value="UniProtKB-SubCell"/>
</dbReference>
<dbReference type="GO" id="GO:0005739">
    <property type="term" value="C:mitochondrion"/>
    <property type="evidence" value="ECO:0007005"/>
    <property type="project" value="TAIR"/>
</dbReference>
<dbReference type="GO" id="GO:0006850">
    <property type="term" value="P:mitochondrial pyruvate transmembrane transport"/>
    <property type="evidence" value="ECO:0007669"/>
    <property type="project" value="InterPro"/>
</dbReference>
<dbReference type="InterPro" id="IPR005336">
    <property type="entry name" value="MPC"/>
</dbReference>
<dbReference type="PANTHER" id="PTHR14154">
    <property type="entry name" value="UPF0041 BRAIN PROTEIN 44-RELATED"/>
    <property type="match status" value="1"/>
</dbReference>
<dbReference type="Pfam" id="PF03650">
    <property type="entry name" value="MPC"/>
    <property type="match status" value="1"/>
</dbReference>
<name>MPC2_ARATH</name>
<evidence type="ECO:0000250" key="1">
    <source>
        <dbReference type="UniProtKB" id="P53157"/>
    </source>
</evidence>
<evidence type="ECO:0000250" key="2">
    <source>
        <dbReference type="UniProtKB" id="Q8LD38"/>
    </source>
</evidence>
<evidence type="ECO:0000255" key="3"/>
<evidence type="ECO:0000305" key="4"/>
<evidence type="ECO:0000312" key="5">
    <source>
        <dbReference type="Araport" id="AT4G14695"/>
    </source>
</evidence>
<evidence type="ECO:0000312" key="6">
    <source>
        <dbReference type="EMBL" id="AAM91629.1"/>
    </source>
</evidence>
<evidence type="ECO:0000312" key="7">
    <source>
        <dbReference type="EMBL" id="AL161539"/>
    </source>
</evidence>
<keyword id="KW-0025">Alternative splicing</keyword>
<keyword id="KW-0472">Membrane</keyword>
<keyword id="KW-0496">Mitochondrion</keyword>
<keyword id="KW-0999">Mitochondrion inner membrane</keyword>
<keyword id="KW-1185">Reference proteome</keyword>
<keyword id="KW-0812">Transmembrane</keyword>
<keyword id="KW-1133">Transmembrane helix</keyword>
<keyword id="KW-0813">Transport</keyword>
<reference key="1">
    <citation type="journal article" date="1998" name="Nature">
        <title>Analysis of 1.9 Mb of contiguous sequence from chromosome 4 of Arabidopsis thaliana.</title>
        <authorList>
            <person name="Bevan M."/>
            <person name="Bancroft I."/>
            <person name="Bent E."/>
            <person name="Love K."/>
            <person name="Goodman H.M."/>
            <person name="Dean C."/>
            <person name="Bergkamp R."/>
            <person name="Dirkse W."/>
            <person name="van Staveren M."/>
            <person name="Stiekema W."/>
            <person name="Drost L."/>
            <person name="Ridley P."/>
            <person name="Hudson S.-A."/>
            <person name="Patel K."/>
            <person name="Murphy G."/>
            <person name="Piffanelli P."/>
            <person name="Wedler H."/>
            <person name="Wedler E."/>
            <person name="Wambutt R."/>
            <person name="Weitzenegger T."/>
            <person name="Pohl T."/>
            <person name="Terryn N."/>
            <person name="Gielen J."/>
            <person name="Villarroel R."/>
            <person name="De Clercq R."/>
            <person name="van Montagu M."/>
            <person name="Lecharny A."/>
            <person name="Aubourg S."/>
            <person name="Gy I."/>
            <person name="Kreis M."/>
            <person name="Lao N."/>
            <person name="Kavanagh T."/>
            <person name="Hempel S."/>
            <person name="Kotter P."/>
            <person name="Entian K.-D."/>
            <person name="Rieger M."/>
            <person name="Schaefer M."/>
            <person name="Funk B."/>
            <person name="Mueller-Auer S."/>
            <person name="Silvey M."/>
            <person name="James R."/>
            <person name="Monfort A."/>
            <person name="Pons A."/>
            <person name="Puigdomenech P."/>
            <person name="Douka A."/>
            <person name="Voukelatou E."/>
            <person name="Milioni D."/>
            <person name="Hatzopoulos P."/>
            <person name="Piravandi E."/>
            <person name="Obermaier B."/>
            <person name="Hilbert H."/>
            <person name="Duesterhoeft A."/>
            <person name="Moores T."/>
            <person name="Jones J.D.G."/>
            <person name="Eneva T."/>
            <person name="Palme K."/>
            <person name="Benes V."/>
            <person name="Rechmann S."/>
            <person name="Ansorge W."/>
            <person name="Cooke R."/>
            <person name="Berger C."/>
            <person name="Delseny M."/>
            <person name="Voet M."/>
            <person name="Volckaert G."/>
            <person name="Mewes H.-W."/>
            <person name="Klosterman S."/>
            <person name="Schueller C."/>
            <person name="Chalwatzis N."/>
        </authorList>
    </citation>
    <scope>NUCLEOTIDE SEQUENCE [LARGE SCALE GENOMIC DNA]</scope>
    <source>
        <strain>cv. Columbia</strain>
    </source>
</reference>
<reference key="2">
    <citation type="journal article" date="1999" name="Nature">
        <title>Sequence and analysis of chromosome 4 of the plant Arabidopsis thaliana.</title>
        <authorList>
            <person name="Mayer K.F.X."/>
            <person name="Schueller C."/>
            <person name="Wambutt R."/>
            <person name="Murphy G."/>
            <person name="Volckaert G."/>
            <person name="Pohl T."/>
            <person name="Duesterhoeft A."/>
            <person name="Stiekema W."/>
            <person name="Entian K.-D."/>
            <person name="Terryn N."/>
            <person name="Harris B."/>
            <person name="Ansorge W."/>
            <person name="Brandt P."/>
            <person name="Grivell L.A."/>
            <person name="Rieger M."/>
            <person name="Weichselgartner M."/>
            <person name="de Simone V."/>
            <person name="Obermaier B."/>
            <person name="Mache R."/>
            <person name="Mueller M."/>
            <person name="Kreis M."/>
            <person name="Delseny M."/>
            <person name="Puigdomenech P."/>
            <person name="Watson M."/>
            <person name="Schmidtheini T."/>
            <person name="Reichert B."/>
            <person name="Portetelle D."/>
            <person name="Perez-Alonso M."/>
            <person name="Boutry M."/>
            <person name="Bancroft I."/>
            <person name="Vos P."/>
            <person name="Hoheisel J."/>
            <person name="Zimmermann W."/>
            <person name="Wedler H."/>
            <person name="Ridley P."/>
            <person name="Langham S.-A."/>
            <person name="McCullagh B."/>
            <person name="Bilham L."/>
            <person name="Robben J."/>
            <person name="van der Schueren J."/>
            <person name="Grymonprez B."/>
            <person name="Chuang Y.-J."/>
            <person name="Vandenbussche F."/>
            <person name="Braeken M."/>
            <person name="Weltjens I."/>
            <person name="Voet M."/>
            <person name="Bastiaens I."/>
            <person name="Aert R."/>
            <person name="Defoor E."/>
            <person name="Weitzenegger T."/>
            <person name="Bothe G."/>
            <person name="Ramsperger U."/>
            <person name="Hilbert H."/>
            <person name="Braun M."/>
            <person name="Holzer E."/>
            <person name="Brandt A."/>
            <person name="Peters S."/>
            <person name="van Staveren M."/>
            <person name="Dirkse W."/>
            <person name="Mooijman P."/>
            <person name="Klein Lankhorst R."/>
            <person name="Rose M."/>
            <person name="Hauf J."/>
            <person name="Koetter P."/>
            <person name="Berneiser S."/>
            <person name="Hempel S."/>
            <person name="Feldpausch M."/>
            <person name="Lamberth S."/>
            <person name="Van den Daele H."/>
            <person name="De Keyser A."/>
            <person name="Buysshaert C."/>
            <person name="Gielen J."/>
            <person name="Villarroel R."/>
            <person name="De Clercq R."/>
            <person name="van Montagu M."/>
            <person name="Rogers J."/>
            <person name="Cronin A."/>
            <person name="Quail M.A."/>
            <person name="Bray-Allen S."/>
            <person name="Clark L."/>
            <person name="Doggett J."/>
            <person name="Hall S."/>
            <person name="Kay M."/>
            <person name="Lennard N."/>
            <person name="McLay K."/>
            <person name="Mayes R."/>
            <person name="Pettett A."/>
            <person name="Rajandream M.A."/>
            <person name="Lyne M."/>
            <person name="Benes V."/>
            <person name="Rechmann S."/>
            <person name="Borkova D."/>
            <person name="Bloecker H."/>
            <person name="Scharfe M."/>
            <person name="Grimm M."/>
            <person name="Loehnert T.-H."/>
            <person name="Dose S."/>
            <person name="de Haan M."/>
            <person name="Maarse A.C."/>
            <person name="Schaefer M."/>
            <person name="Mueller-Auer S."/>
            <person name="Gabel C."/>
            <person name="Fuchs M."/>
            <person name="Fartmann B."/>
            <person name="Granderath K."/>
            <person name="Dauner D."/>
            <person name="Herzl A."/>
            <person name="Neumann S."/>
            <person name="Argiriou A."/>
            <person name="Vitale D."/>
            <person name="Liguori R."/>
            <person name="Piravandi E."/>
            <person name="Massenet O."/>
            <person name="Quigley F."/>
            <person name="Clabauld G."/>
            <person name="Muendlein A."/>
            <person name="Felber R."/>
            <person name="Schnabl S."/>
            <person name="Hiller R."/>
            <person name="Schmidt W."/>
            <person name="Lecharny A."/>
            <person name="Aubourg S."/>
            <person name="Chefdor F."/>
            <person name="Cooke R."/>
            <person name="Berger C."/>
            <person name="Monfort A."/>
            <person name="Casacuberta E."/>
            <person name="Gibbons T."/>
            <person name="Weber N."/>
            <person name="Vandenbol M."/>
            <person name="Bargues M."/>
            <person name="Terol J."/>
            <person name="Torres A."/>
            <person name="Perez-Perez A."/>
            <person name="Purnelle B."/>
            <person name="Bent E."/>
            <person name="Johnson S."/>
            <person name="Tacon D."/>
            <person name="Jesse T."/>
            <person name="Heijnen L."/>
            <person name="Schwarz S."/>
            <person name="Scholler P."/>
            <person name="Heber S."/>
            <person name="Francs P."/>
            <person name="Bielke C."/>
            <person name="Frishman D."/>
            <person name="Haase D."/>
            <person name="Lemcke K."/>
            <person name="Mewes H.-W."/>
            <person name="Stocker S."/>
            <person name="Zaccaria P."/>
            <person name="Bevan M."/>
            <person name="Wilson R.K."/>
            <person name="de la Bastide M."/>
            <person name="Habermann K."/>
            <person name="Parnell L."/>
            <person name="Dedhia N."/>
            <person name="Gnoj L."/>
            <person name="Schutz K."/>
            <person name="Huang E."/>
            <person name="Spiegel L."/>
            <person name="Sekhon M."/>
            <person name="Murray J."/>
            <person name="Sheet P."/>
            <person name="Cordes M."/>
            <person name="Abu-Threideh J."/>
            <person name="Stoneking T."/>
            <person name="Kalicki J."/>
            <person name="Graves T."/>
            <person name="Harmon G."/>
            <person name="Edwards J."/>
            <person name="Latreille P."/>
            <person name="Courtney L."/>
            <person name="Cloud J."/>
            <person name="Abbott A."/>
            <person name="Scott K."/>
            <person name="Johnson D."/>
            <person name="Minx P."/>
            <person name="Bentley D."/>
            <person name="Fulton B."/>
            <person name="Miller N."/>
            <person name="Greco T."/>
            <person name="Kemp K."/>
            <person name="Kramer J."/>
            <person name="Fulton L."/>
            <person name="Mardis E."/>
            <person name="Dante M."/>
            <person name="Pepin K."/>
            <person name="Hillier L.W."/>
            <person name="Nelson J."/>
            <person name="Spieth J."/>
            <person name="Ryan E."/>
            <person name="Andrews S."/>
            <person name="Geisel C."/>
            <person name="Layman D."/>
            <person name="Du H."/>
            <person name="Ali J."/>
            <person name="Berghoff A."/>
            <person name="Jones K."/>
            <person name="Drone K."/>
            <person name="Cotton M."/>
            <person name="Joshu C."/>
            <person name="Antonoiu B."/>
            <person name="Zidanic M."/>
            <person name="Strong C."/>
            <person name="Sun H."/>
            <person name="Lamar B."/>
            <person name="Yordan C."/>
            <person name="Ma P."/>
            <person name="Zhong J."/>
            <person name="Preston R."/>
            <person name="Vil D."/>
            <person name="Shekher M."/>
            <person name="Matero A."/>
            <person name="Shah R."/>
            <person name="Swaby I.K."/>
            <person name="O'Shaughnessy A."/>
            <person name="Rodriguez M."/>
            <person name="Hoffman J."/>
            <person name="Till S."/>
            <person name="Granat S."/>
            <person name="Shohdy N."/>
            <person name="Hasegawa A."/>
            <person name="Hameed A."/>
            <person name="Lodhi M."/>
            <person name="Johnson A."/>
            <person name="Chen E."/>
            <person name="Marra M.A."/>
            <person name="Martienssen R."/>
            <person name="McCombie W.R."/>
        </authorList>
    </citation>
    <scope>NUCLEOTIDE SEQUENCE [LARGE SCALE GENOMIC DNA]</scope>
    <source>
        <strain>cv. Columbia</strain>
    </source>
</reference>
<reference key="3">
    <citation type="journal article" date="2017" name="Plant J.">
        <title>Araport11: a complete reannotation of the Arabidopsis thaliana reference genome.</title>
        <authorList>
            <person name="Cheng C.Y."/>
            <person name="Krishnakumar V."/>
            <person name="Chan A.P."/>
            <person name="Thibaud-Nissen F."/>
            <person name="Schobel S."/>
            <person name="Town C.D."/>
        </authorList>
    </citation>
    <scope>GENOME REANNOTATION</scope>
    <source>
        <strain>cv. Columbia</strain>
    </source>
</reference>
<reference key="4">
    <citation type="journal article" date="2003" name="Science">
        <title>Empirical analysis of transcriptional activity in the Arabidopsis genome.</title>
        <authorList>
            <person name="Yamada K."/>
            <person name="Lim J."/>
            <person name="Dale J.M."/>
            <person name="Chen H."/>
            <person name="Shinn P."/>
            <person name="Palm C.J."/>
            <person name="Southwick A.M."/>
            <person name="Wu H.C."/>
            <person name="Kim C.J."/>
            <person name="Nguyen M."/>
            <person name="Pham P.K."/>
            <person name="Cheuk R.F."/>
            <person name="Karlin-Newmann G."/>
            <person name="Liu S.X."/>
            <person name="Lam B."/>
            <person name="Sakano H."/>
            <person name="Wu T."/>
            <person name="Yu G."/>
            <person name="Miranda M."/>
            <person name="Quach H.L."/>
            <person name="Tripp M."/>
            <person name="Chang C.H."/>
            <person name="Lee J.M."/>
            <person name="Toriumi M.J."/>
            <person name="Chan M.M."/>
            <person name="Tang C.C."/>
            <person name="Onodera C.S."/>
            <person name="Deng J.M."/>
            <person name="Akiyama K."/>
            <person name="Ansari Y."/>
            <person name="Arakawa T."/>
            <person name="Banh J."/>
            <person name="Banno F."/>
            <person name="Bowser L."/>
            <person name="Brooks S.Y."/>
            <person name="Carninci P."/>
            <person name="Chao Q."/>
            <person name="Choy N."/>
            <person name="Enju A."/>
            <person name="Goldsmith A.D."/>
            <person name="Gurjal M."/>
            <person name="Hansen N.F."/>
            <person name="Hayashizaki Y."/>
            <person name="Johnson-Hopson C."/>
            <person name="Hsuan V.W."/>
            <person name="Iida K."/>
            <person name="Karnes M."/>
            <person name="Khan S."/>
            <person name="Koesema E."/>
            <person name="Ishida J."/>
            <person name="Jiang P.X."/>
            <person name="Jones T."/>
            <person name="Kawai J."/>
            <person name="Kamiya A."/>
            <person name="Meyers C."/>
            <person name="Nakajima M."/>
            <person name="Narusaka M."/>
            <person name="Seki M."/>
            <person name="Sakurai T."/>
            <person name="Satou M."/>
            <person name="Tamse R."/>
            <person name="Vaysberg M."/>
            <person name="Wallender E.K."/>
            <person name="Wong C."/>
            <person name="Yamamura Y."/>
            <person name="Yuan S."/>
            <person name="Shinozaki K."/>
            <person name="Davis R.W."/>
            <person name="Theologis A."/>
            <person name="Ecker J.R."/>
        </authorList>
    </citation>
    <scope>NUCLEOTIDE SEQUENCE [LARGE SCALE MRNA]</scope>
    <source>
        <strain>cv. Columbia</strain>
    </source>
</reference>
<sequence length="109" mass="12222">MATSKLQALWNHPAGPKTIHFWAPTFKWGISIANIADFQKPPENISYLQQIAVTCTGMIWCRCSTIITPKNWNLFSVNVAMAATGIYQLTRKIKYDYVSEAEAAVEIEG</sequence>
<proteinExistence type="inferred from homology"/>
<feature type="chain" id="PRO_0000431616" description="Mitochondrial pyruvate carrier 2">
    <location>
        <begin position="1"/>
        <end position="109"/>
    </location>
</feature>
<feature type="transmembrane region" description="Helical; Name=1" evidence="4">
    <location>
        <begin position="19"/>
        <end position="35"/>
    </location>
</feature>
<feature type="transmembrane region" description="Helical; Name=1" evidence="3">
    <location>
        <begin position="51"/>
        <end position="67"/>
    </location>
</feature>
<feature type="transmembrane region" description="Helical; Name=2" evidence="3">
    <location>
        <begin position="74"/>
        <end position="90"/>
    </location>
</feature>
<gene>
    <name evidence="4" type="primary">MPC2</name>
    <name evidence="5" type="ordered locus">At4g14695</name>
    <name evidence="7" type="ORF">FCAALL.286</name>
</gene>
<organism evidence="6">
    <name type="scientific">Arabidopsis thaliana</name>
    <name type="common">Mouse-ear cress</name>
    <dbReference type="NCBI Taxonomy" id="3702"/>
    <lineage>
        <taxon>Eukaryota</taxon>
        <taxon>Viridiplantae</taxon>
        <taxon>Streptophyta</taxon>
        <taxon>Embryophyta</taxon>
        <taxon>Tracheophyta</taxon>
        <taxon>Spermatophyta</taxon>
        <taxon>Magnoliopsida</taxon>
        <taxon>eudicotyledons</taxon>
        <taxon>Gunneridae</taxon>
        <taxon>Pentapetalae</taxon>
        <taxon>rosids</taxon>
        <taxon>malvids</taxon>
        <taxon>Brassicales</taxon>
        <taxon>Brassicaceae</taxon>
        <taxon>Camelineae</taxon>
        <taxon>Arabidopsis</taxon>
    </lineage>
</organism>
<comment type="function">
    <text evidence="2">Mediates the uptake of pyruvate into mitochondria.</text>
</comment>
<comment type="subcellular location">
    <subcellularLocation>
        <location evidence="1">Mitochondrion inner membrane</location>
        <topology evidence="3">Multi-pass membrane protein</topology>
    </subcellularLocation>
</comment>
<comment type="alternative products">
    <event type="alternative splicing"/>
    <isoform>
        <id>Q8L7H8-1</id>
        <name>1</name>
        <sequence type="displayed"/>
    </isoform>
</comment>
<comment type="similarity">
    <text evidence="4">Belongs to the mitochondrial pyruvate carrier (MPC) (TC 2.A.105) family.</text>
</comment>
<protein>
    <recommendedName>
        <fullName evidence="4">Mitochondrial pyruvate carrier 2</fullName>
    </recommendedName>
</protein>
<accession>Q8L7H8</accession>